<name>CD151_MACMU</name>
<gene>
    <name type="primary">CD151</name>
</gene>
<comment type="function">
    <text evidence="1">Structural component of specialized membrane microdomains known as tetraspanin-enriched microdomains (TERMs), which act as platforms for receptor clustering and signaling. Plays a role in various cellular and molecular mechanism through its association with both integrin and non-integrin proteins. These interactions facilitate critical cellular functions, including cell-to-cell communication, wound healing, platelet aggregation, trafficking, cell motility, and angiogenesis. Via interaction with JAM-A/F11R and integrin ITGA3:ITGB1, promotes the recruitment of signaling molecules such as RAC1, CDC42 and RhoGTPases to facilitate the polarization of epithelial cells and the reorganization of the actin cytoskeleton, which are critical steps in cell migration process. Regulates the glycosylation pattern of ITGA3:ITGB1 thereby modulating its activity. Plays an essential role in the maintenance of central laminin-binding integrin ITGA6:ITGB4-containing adhesion complexes. Essential for the proper assembly of the glomerular and tubular basement membranes in kidney. Contributes to T-cell activation by modulating integrin signaling leading to activation of downstream targets PTK2 and MAPK1/MAPK3.</text>
</comment>
<comment type="subunit">
    <text evidence="1">Interacts with integrins ITGA3:ITGB1, ITGA5:ITGB1, ITGA3:ITGB1 and ITGA6:ITGB4 and with CD9 and CD181. Interacts (via the second extracellular domain) with integrin ITGAV:ITGB3. Interacts with ITGA3; this interaction modulates ITGA3 glycosylation pattern. Interacts with F11R. Interacts with RAC1 and CDC42; these interactions mediate physical association of RAC1 and CDC42 with integrin adhesion receptor complexes.</text>
</comment>
<comment type="subcellular location">
    <subcellularLocation>
        <location evidence="1">Cell membrane</location>
        <topology evidence="1">Multi-pass membrane protein</topology>
    </subcellularLocation>
    <text evidence="1">Relocalizes to the immune synapse in T-cells upon activation.</text>
</comment>
<comment type="PTM">
    <text evidence="1">Palmitoylated. Palmitoylation by ZDHHC2 regulates CD151 expression, association with other tetraspanin family proteins and function in cell adhesion.</text>
</comment>
<comment type="PTM">
    <text evidence="1">Ubiquitinated by RNF128 on lysine residues present in the tetraspanin amino terminus via 'Lys-48'-linked ubiquitin leading to proteasomal degradation.</text>
</comment>
<comment type="similarity">
    <text evidence="3">Belongs to the tetraspanin (TM4SF) family.</text>
</comment>
<sequence length="253" mass="28438">MGEFNEKKTTCGTVCLKYLLFTYNCCFWLAGLAVMAVGIWTLALKSDYISLLASGTYLATAYILVVAGAVVMVTGVLGCCATFKERRNLLRLYFILLLIIFLLEIIAGVLAYVYYQQLNTELKENLKDTMAKRYHQPGHEAVTSAVDQLQQEFHCCGSNNSQDWRDSEWIRLREARGRVVPDSCCKTVVAGCGQRDHAFNIYKVEGGFITKLETFIQEHLRVIGAVGTGIACVQVFGMIFTCCLYRSLKLEHY</sequence>
<proteinExistence type="evidence at transcript level"/>
<keyword id="KW-1003">Cell membrane</keyword>
<keyword id="KW-0325">Glycoprotein</keyword>
<keyword id="KW-0449">Lipoprotein</keyword>
<keyword id="KW-0472">Membrane</keyword>
<keyword id="KW-0564">Palmitate</keyword>
<keyword id="KW-1185">Reference proteome</keyword>
<keyword id="KW-0812">Transmembrane</keyword>
<keyword id="KW-1133">Transmembrane helix</keyword>
<keyword id="KW-0832">Ubl conjugation</keyword>
<protein>
    <recommendedName>
        <fullName>CD151 antigen</fullName>
    </recommendedName>
    <alternativeName>
        <fullName>Platelet-endothelial tetraspan antigen 3</fullName>
        <shortName>PETA-3</shortName>
    </alternativeName>
    <cdAntigenName>CD151</cdAntigenName>
</protein>
<accession>P61171</accession>
<accession>Q9MYM2</accession>
<organism>
    <name type="scientific">Macaca mulatta</name>
    <name type="common">Rhesus macaque</name>
    <dbReference type="NCBI Taxonomy" id="9544"/>
    <lineage>
        <taxon>Eukaryota</taxon>
        <taxon>Metazoa</taxon>
        <taxon>Chordata</taxon>
        <taxon>Craniata</taxon>
        <taxon>Vertebrata</taxon>
        <taxon>Euteleostomi</taxon>
        <taxon>Mammalia</taxon>
        <taxon>Eutheria</taxon>
        <taxon>Euarchontoglires</taxon>
        <taxon>Primates</taxon>
        <taxon>Haplorrhini</taxon>
        <taxon>Catarrhini</taxon>
        <taxon>Cercopithecidae</taxon>
        <taxon>Cercopithecinae</taxon>
        <taxon>Macaca</taxon>
    </lineage>
</organism>
<feature type="chain" id="PRO_0000219231" description="CD151 antigen">
    <location>
        <begin position="1"/>
        <end position="253"/>
    </location>
</feature>
<feature type="topological domain" description="Cytoplasmic" evidence="2">
    <location>
        <begin position="1"/>
        <end position="18"/>
    </location>
</feature>
<feature type="transmembrane region" description="Helical" evidence="2">
    <location>
        <begin position="19"/>
        <end position="39"/>
    </location>
</feature>
<feature type="topological domain" description="Extracellular" evidence="2">
    <location>
        <begin position="40"/>
        <end position="57"/>
    </location>
</feature>
<feature type="transmembrane region" description="Helical" evidence="2">
    <location>
        <begin position="58"/>
        <end position="78"/>
    </location>
</feature>
<feature type="topological domain" description="Cytoplasmic" evidence="2">
    <location>
        <begin position="79"/>
        <end position="91"/>
    </location>
</feature>
<feature type="transmembrane region" description="Helical" evidence="2">
    <location>
        <begin position="92"/>
        <end position="112"/>
    </location>
</feature>
<feature type="topological domain" description="Extracellular" evidence="2">
    <location>
        <begin position="113"/>
        <end position="221"/>
    </location>
</feature>
<feature type="transmembrane region" description="Helical" evidence="2">
    <location>
        <begin position="222"/>
        <end position="242"/>
    </location>
</feature>
<feature type="topological domain" description="Cytoplasmic" evidence="2">
    <location>
        <begin position="243"/>
        <end position="253"/>
    </location>
</feature>
<feature type="lipid moiety-binding region" description="S-palmitoyl cysteine" evidence="1">
    <location>
        <position position="11"/>
    </location>
</feature>
<feature type="lipid moiety-binding region" description="S-palmitoyl cysteine" evidence="1">
    <location>
        <position position="15"/>
    </location>
</feature>
<feature type="lipid moiety-binding region" description="S-palmitoyl cysteine" evidence="1">
    <location>
        <position position="242"/>
    </location>
</feature>
<feature type="lipid moiety-binding region" description="S-palmitoyl cysteine" evidence="1">
    <location>
        <position position="243"/>
    </location>
</feature>
<feature type="glycosylation site" description="N-linked (GlcNAc...) asparagine" evidence="2">
    <location>
        <position position="159"/>
    </location>
</feature>
<dbReference type="EMBL" id="AF275665">
    <property type="protein sequence ID" value="AAF90151.1"/>
    <property type="molecule type" value="mRNA"/>
</dbReference>
<dbReference type="RefSeq" id="NP_001027994.1">
    <property type="nucleotide sequence ID" value="NM_001032822.1"/>
</dbReference>
<dbReference type="SMR" id="P61171"/>
<dbReference type="FunCoup" id="P61171">
    <property type="interactions" value="243"/>
</dbReference>
<dbReference type="STRING" id="9544.ENSMMUP00000066024"/>
<dbReference type="GlyCosmos" id="P61171">
    <property type="glycosylation" value="1 site, No reported glycans"/>
</dbReference>
<dbReference type="PaxDb" id="9544-ENSMMUP00000027151"/>
<dbReference type="eggNOG" id="KOG3882">
    <property type="taxonomic scope" value="Eukaryota"/>
</dbReference>
<dbReference type="InParanoid" id="P61171"/>
<dbReference type="Proteomes" id="UP000006718">
    <property type="component" value="Unassembled WGS sequence"/>
</dbReference>
<dbReference type="GO" id="GO:0005886">
    <property type="term" value="C:plasma membrane"/>
    <property type="evidence" value="ECO:0000318"/>
    <property type="project" value="GO_Central"/>
</dbReference>
<dbReference type="GO" id="GO:0005178">
    <property type="term" value="F:integrin binding"/>
    <property type="evidence" value="ECO:0000250"/>
    <property type="project" value="UniProtKB"/>
</dbReference>
<dbReference type="GO" id="GO:0016477">
    <property type="term" value="P:cell migration"/>
    <property type="evidence" value="ECO:0000318"/>
    <property type="project" value="GO_Central"/>
</dbReference>
<dbReference type="CDD" id="cd03155">
    <property type="entry name" value="CD151_like_LEL"/>
    <property type="match status" value="1"/>
</dbReference>
<dbReference type="FunFam" id="1.10.1450.10:FF:000005">
    <property type="entry name" value="Tetraspanin"/>
    <property type="match status" value="1"/>
</dbReference>
<dbReference type="Gene3D" id="1.10.1450.10">
    <property type="entry name" value="Tetraspanin"/>
    <property type="match status" value="1"/>
</dbReference>
<dbReference type="InterPro" id="IPR018499">
    <property type="entry name" value="Tetraspanin/Peripherin"/>
</dbReference>
<dbReference type="InterPro" id="IPR000301">
    <property type="entry name" value="Tetraspanin_animals"/>
</dbReference>
<dbReference type="InterPro" id="IPR018503">
    <property type="entry name" value="Tetraspanin_CS"/>
</dbReference>
<dbReference type="InterPro" id="IPR008952">
    <property type="entry name" value="Tetraspanin_EC2_sf"/>
</dbReference>
<dbReference type="PANTHER" id="PTHR19282:SF487">
    <property type="entry name" value="CD151 ANTIGEN"/>
    <property type="match status" value="1"/>
</dbReference>
<dbReference type="PANTHER" id="PTHR19282">
    <property type="entry name" value="TETRASPANIN"/>
    <property type="match status" value="1"/>
</dbReference>
<dbReference type="Pfam" id="PF00335">
    <property type="entry name" value="Tetraspanin"/>
    <property type="match status" value="1"/>
</dbReference>
<dbReference type="PIRSF" id="PIRSF002419">
    <property type="entry name" value="Tetraspanin"/>
    <property type="match status" value="1"/>
</dbReference>
<dbReference type="PRINTS" id="PR00259">
    <property type="entry name" value="TMFOUR"/>
</dbReference>
<dbReference type="SUPFAM" id="SSF48652">
    <property type="entry name" value="Tetraspanin"/>
    <property type="match status" value="1"/>
</dbReference>
<dbReference type="PROSITE" id="PS00421">
    <property type="entry name" value="TM4_1"/>
    <property type="match status" value="1"/>
</dbReference>
<reference key="1">
    <citation type="submission" date="2000-06" db="EMBL/GenBank/DDBJ databases">
        <title>CD151/PETA-3, a tetraspanin molecule, interacts with the 3' untranslated region and partial nucleoprotein gene of porcine reproductive and respiratory syndrome virus RNA.</title>
        <authorList>
            <person name="Shanmukhappa K."/>
            <person name="Kapil S."/>
        </authorList>
    </citation>
    <scope>NUCLEOTIDE SEQUENCE [MRNA]</scope>
</reference>
<evidence type="ECO:0000250" key="1">
    <source>
        <dbReference type="UniProtKB" id="P48509"/>
    </source>
</evidence>
<evidence type="ECO:0000255" key="2"/>
<evidence type="ECO:0000305" key="3"/>